<organism>
    <name type="scientific">Onchocerca volvulus</name>
    <dbReference type="NCBI Taxonomy" id="6282"/>
    <lineage>
        <taxon>Eukaryota</taxon>
        <taxon>Metazoa</taxon>
        <taxon>Ecdysozoa</taxon>
        <taxon>Nematoda</taxon>
        <taxon>Chromadorea</taxon>
        <taxon>Rhabditida</taxon>
        <taxon>Spirurina</taxon>
        <taxon>Spiruromorpha</taxon>
        <taxon>Filarioidea</taxon>
        <taxon>Onchocercidae</taxon>
        <taxon>Onchocerca</taxon>
    </lineage>
</organism>
<feature type="signal peptide" evidence="1">
    <location>
        <begin position="1"/>
        <end position="16"/>
    </location>
</feature>
<feature type="chain" id="PRO_0000008765" description="Fatty-acid and retinol-binding protein 1" evidence="1">
    <location>
        <begin position="17"/>
        <end position="178"/>
    </location>
</feature>
<feature type="coiled-coil region" evidence="1">
    <location>
        <begin position="67"/>
        <end position="89"/>
    </location>
</feature>
<feature type="coiled-coil region" evidence="1">
    <location>
        <begin position="122"/>
        <end position="154"/>
    </location>
</feature>
<feature type="glycosylation site" description="N-linked (GlcNAc...) asparagine" evidence="1">
    <location>
        <position position="44"/>
    </location>
</feature>
<feature type="glycosylation site" description="N-linked (GlcNAc...) asparagine" evidence="1">
    <location>
        <position position="75"/>
    </location>
</feature>
<feature type="glycosylation site" description="N-linked (GlcNAc...) asparagine" evidence="1">
    <location>
        <position position="157"/>
    </location>
</feature>
<feature type="sequence conflict" description="In Ref. 2; CAA59101." evidence="9" ref="2">
    <original>L</original>
    <variation>H</variation>
    <location>
        <position position="53"/>
    </location>
</feature>
<feature type="sequence conflict" description="In Ref. 2; CAA59101." evidence="9" ref="2">
    <original>N</original>
    <variation>T</variation>
    <location>
        <position position="75"/>
    </location>
</feature>
<feature type="sequence conflict" description="In Ref. 4; AAC60510." evidence="9" ref="4">
    <original>I</original>
    <variation>N</variation>
    <location>
        <position position="137"/>
    </location>
</feature>
<feature type="sequence conflict" description="In Ref. 2; CAA59101." evidence="9" ref="2">
    <original>A</original>
    <variation>T</variation>
    <location>
        <position position="153"/>
    </location>
</feature>
<feature type="sequence conflict" description="In Ref. 4." evidence="9" ref="4">
    <original>IIT</original>
    <variation>RNS</variation>
    <location>
        <begin position="161"/>
        <end position="163"/>
    </location>
</feature>
<evidence type="ECO:0000255" key="1"/>
<evidence type="ECO:0000269" key="2">
    <source>
    </source>
</evidence>
<evidence type="ECO:0000269" key="3">
    <source>
    </source>
</evidence>
<evidence type="ECO:0000269" key="4">
    <source>
    </source>
</evidence>
<evidence type="ECO:0000269" key="5">
    <source>
    </source>
</evidence>
<evidence type="ECO:0000269" key="6">
    <source>
    </source>
</evidence>
<evidence type="ECO:0000269" key="7">
    <source>
    </source>
</evidence>
<evidence type="ECO:0000303" key="8">
    <source>
    </source>
</evidence>
<evidence type="ECO:0000305" key="9"/>
<evidence type="ECO:0000312" key="10">
    <source>
        <dbReference type="EMBL" id="AAA65186.1"/>
    </source>
</evidence>
<evidence type="ECO:0000312" key="11">
    <source>
        <dbReference type="EMBL" id="AAC32662.1"/>
    </source>
</evidence>
<evidence type="ECO:0000312" key="12">
    <source>
        <dbReference type="EMBL" id="AAC60510.2"/>
    </source>
</evidence>
<evidence type="ECO:0000312" key="13">
    <source>
        <dbReference type="EMBL" id="CAA59101.1"/>
    </source>
</evidence>
<dbReference type="EMBL" id="L27686">
    <property type="protein sequence ID" value="AAC32662.1"/>
    <property type="molecule type" value="mRNA"/>
</dbReference>
<dbReference type="EMBL" id="X84358">
    <property type="protein sequence ID" value="CAA59101.1"/>
    <property type="status" value="ALT_SEQ"/>
    <property type="molecule type" value="mRNA"/>
</dbReference>
<dbReference type="EMBL" id="L41652">
    <property type="protein sequence ID" value="AAA65186.1"/>
    <property type="molecule type" value="mRNA"/>
</dbReference>
<dbReference type="EMBL" id="S71371">
    <property type="protein sequence ID" value="AAC60510.2"/>
    <property type="molecule type" value="mRNA"/>
</dbReference>
<dbReference type="SMR" id="Q25619"/>
<dbReference type="STRING" id="6282.Q25619"/>
<dbReference type="GlyCosmos" id="Q25619">
    <property type="glycosylation" value="3 sites, No reported glycans"/>
</dbReference>
<dbReference type="HOGENOM" id="CLU_117803_0_0_1"/>
<dbReference type="Proteomes" id="UP000024404">
    <property type="component" value="Unassembled WGS sequence"/>
</dbReference>
<dbReference type="GO" id="GO:0005576">
    <property type="term" value="C:extracellular region"/>
    <property type="evidence" value="ECO:0000314"/>
    <property type="project" value="UniProtKB"/>
</dbReference>
<dbReference type="GO" id="GO:0005504">
    <property type="term" value="F:fatty acid binding"/>
    <property type="evidence" value="ECO:0000314"/>
    <property type="project" value="UniProtKB"/>
</dbReference>
<dbReference type="GO" id="GO:0016918">
    <property type="term" value="F:retinal binding"/>
    <property type="evidence" value="ECO:0007669"/>
    <property type="project" value="UniProtKB-KW"/>
</dbReference>
<dbReference type="GO" id="GO:0019841">
    <property type="term" value="F:retinol binding"/>
    <property type="evidence" value="ECO:0000314"/>
    <property type="project" value="UniProtKB"/>
</dbReference>
<dbReference type="FunFam" id="1.20.120.1100:FF:000001">
    <property type="entry name" value="Fatty-acid and retinol-binding protein 1"/>
    <property type="match status" value="1"/>
</dbReference>
<dbReference type="Gene3D" id="1.20.120.1100">
    <property type="match status" value="1"/>
</dbReference>
<dbReference type="InterPro" id="IPR008632">
    <property type="entry name" value="Gp-FAR-1"/>
</dbReference>
<dbReference type="PANTHER" id="PTHR31418">
    <property type="entry name" value="FATTY-ACID AND RETINOL-BINDING PROTEIN 1"/>
    <property type="match status" value="1"/>
</dbReference>
<dbReference type="PANTHER" id="PTHR31418:SF7">
    <property type="entry name" value="FATTY-ACID AND RETINOL-BINDING PROTEIN 1"/>
    <property type="match status" value="1"/>
</dbReference>
<dbReference type="Pfam" id="PF05823">
    <property type="entry name" value="Gp-FAR-1"/>
    <property type="match status" value="1"/>
</dbReference>
<protein>
    <recommendedName>
        <fullName>Fatty-acid and retinol-binding protein 1</fullName>
    </recommendedName>
    <alternativeName>
        <fullName>Antigen maltose-binding protein</fullName>
    </alternativeName>
    <alternativeName>
        <fullName>Ov-FAR-1</fullName>
    </alternativeName>
    <alternativeName>
        <fullName>Ov20</fullName>
    </alternativeName>
    <alternativeName>
        <fullName>OvMBP/11</fullName>
    </alternativeName>
    <alternativeName>
        <fullName>OvS1</fullName>
    </alternativeName>
    <alternativeName>
        <fullName>S1 protein</fullName>
    </alternativeName>
</protein>
<comment type="function">
    <text evidence="2 3 7">Binds retinol. Also binds the fluorescent fatty acids 11-((5-dimethylaminonaphthalene-1-sulfonyl)amino)undecanoic acid (DAUDA), dansyl-DL-alpha-aminocaprylic acid (DACA) and parinaric acid. Binds long chain fatty acids, with highest affinity for arachidonic acid, linoleic acid and oleic acid. These long chain fatty acids can act competitively to displace bound fluorescent fatty acids and retinol. May compete with host albumin for fatty acid-binding.</text>
</comment>
<comment type="subcellular location">
    <subcellularLocation>
        <location evidence="3 4 6">Secreted</location>
    </subcellularLocation>
</comment>
<comment type="tissue specificity">
    <text evidence="4 5 6">Localized to the adult body wall, in particular to the lateral chords. Found in the epithelium of the uterus of adult females.</text>
</comment>
<comment type="developmental stage">
    <text evidence="4 5 6">Found in developing embryos, microfilariae, third and fourth stage larvae and adults.</text>
</comment>
<comment type="PTM">
    <text evidence="3 4">N-glycosylated.</text>
</comment>
<comment type="similarity">
    <text evidence="2 3 7 9">Belongs to the fatty-acid and retinol-binding protein (FARBP) family.</text>
</comment>
<comment type="sequence caution" evidence="9">
    <conflict type="erroneous termination">
        <sequence resource="EMBL-CDS" id="CAA59101"/>
    </conflict>
    <text>Truncated C-terminus.</text>
</comment>
<sequence>MYHQLILMALIGVIMANVVPFSMSNIPEEYKEFIPEEVKNFYKNLTQEDRQILRELASKHATFTNEDAALEALKNKSDKLYQKAVELRNFVKAKIDSLKPDAKAFVDEIIAKVRSLRPEDGQKLDMEKLKQAARDIIAKYEALNEETKEELKATFPNTTKIITNEKFKRIANSFLQKN</sequence>
<accession>Q25619</accession>
<accession>P91785</accession>
<accession>Q25622</accession>
<accession>Q25624</accession>
<reference evidence="9 11" key="1">
    <citation type="journal article" date="1995" name="Mol. Biochem. Parasitol.">
        <title>Characterisation of an immunodominant glycoprotein antigen of Onchocerca volvulus with homologues in other filarial nematodes and Caenorhabditis elegans.</title>
        <authorList>
            <person name="Tree T.I.M."/>
            <person name="Gillespie A.J."/>
            <person name="Shepley K.J."/>
            <person name="Blaxter M.L."/>
            <person name="Tuan R.S."/>
            <person name="Bradley J.E."/>
        </authorList>
    </citation>
    <scope>NUCLEOTIDE SEQUENCE [MRNA]</scope>
    <scope>SUBCELLULAR LOCATION</scope>
    <scope>TISSUE SPECIFICITY</scope>
    <scope>DEVELOPMENTAL STAGE</scope>
    <scope>GLYCOSYLATION</scope>
</reference>
<reference evidence="9 13" key="2">
    <citation type="journal article" date="1995" name="Trop. Med. Parasitol.">
        <title>A putative protein related to human chemokines encoded antisense to the cDNA of an Onchocerca volvulus antigen.</title>
        <authorList>
            <person name="Erttmann K.D."/>
            <person name="Buettner D.W."/>
            <person name="Gallin M.Y."/>
        </authorList>
    </citation>
    <scope>NUCLEOTIDE SEQUENCE [MRNA]</scope>
    <scope>TISSUE SPECIFICITY</scope>
    <scope>DEVELOPMENTAL STAGE</scope>
</reference>
<reference evidence="9 10" key="3">
    <citation type="journal article" date="1996" name="Parasite Immunol.">
        <title>Characterization of a secreted antigen of Onchocerca volvulus with host-protective potential.</title>
        <authorList>
            <person name="Jenkins R.E."/>
            <person name="Taylor M.J."/>
            <person name="Gilvary N."/>
            <person name="Bianco A.E."/>
        </authorList>
    </citation>
    <scope>NUCLEOTIDE SEQUENCE [MRNA] OF 32-178</scope>
    <scope>TISSUE SPECIFICITY</scope>
    <scope>DEVELOPMENTAL STAGE</scope>
</reference>
<reference evidence="9 12" key="4">
    <citation type="journal article" date="1994" name="Parasite Immunol.">
        <title>Heterogeneity of IgG antibody responses to cloned Onchocerca volvulus antigens in microfiladermia positive individuals from Esmeraldas Province, Ecuador.</title>
        <authorList>
            <person name="Trenholme K.R."/>
            <person name="Tree T.I.M."/>
            <person name="Gillespie A.J."/>
            <person name="Guderian R."/>
            <person name="Maizels R.M."/>
            <person name="Bradley J.E."/>
        </authorList>
    </citation>
    <scope>NUCLEOTIDE SEQUENCE [MRNA] OF 66-163</scope>
</reference>
<reference evidence="9" key="5">
    <citation type="journal article" date="1997" name="J. Biol. Chem.">
        <title>The Ov20 protein of the parasitic nematode Onchocerca volvulus. A structurally novel class of small helix-rich retinol-binding proteins.</title>
        <authorList>
            <person name="Kennedy M.W."/>
            <person name="Garside L.H."/>
            <person name="Goodrick L.E."/>
            <person name="McDermott L."/>
            <person name="Brass A."/>
            <person name="Price N.C."/>
            <person name="Kelly S.M."/>
            <person name="Cooper A."/>
            <person name="Bradley J.E."/>
        </authorList>
    </citation>
    <scope>RETINOL-BINDING</scope>
    <scope>BINDING TO FATTY ACIDS</scope>
</reference>
<reference evidence="9" key="6">
    <citation type="journal article" date="2000" name="Mol. Biochem. Parasitol.">
        <title>The secretory Onchocerca volvulus protein OvS1/Ov20 exhibits the capacity to compete with serum albumin for the host's long-chain fatty acids.</title>
        <authorList>
            <person name="Mpagi J.L."/>
            <person name="Erttmann K.D."/>
            <person name="Brattig N.W."/>
        </authorList>
    </citation>
    <scope>LONG CHAIN FATTY ACID-BINDING</scope>
</reference>
<reference evidence="9" key="7">
    <citation type="journal article" date="2002" name="Mol. Biochem. Parasitol.">
        <title>The FAR proteins of filarial nematodes: secretion, glycosylation and lipid binding characteristics.</title>
        <authorList>
            <person name="Garofalo A."/>
            <person name="Klager S.L."/>
            <person name="Rowlinson M.C."/>
            <person name="Nirmalan N."/>
            <person name="Klion A.D."/>
            <person name="Allen J.E."/>
            <person name="Kennedy M.W."/>
            <person name="Bradley J.E."/>
        </authorList>
    </citation>
    <scope>RETINOL-BINDING</scope>
    <scope>BINDING TO FATTY ACIDS</scope>
    <scope>SUBCELLULAR LOCATION</scope>
    <scope>GLYCOSYLATION</scope>
</reference>
<proteinExistence type="evidence at protein level"/>
<name>FAR1_ONCVO</name>
<gene>
    <name evidence="8" type="primary">far-1</name>
    <name evidence="10" type="synonym">MOv2</name>
</gene>
<keyword id="KW-0175">Coiled coil</keyword>
<keyword id="KW-0325">Glycoprotein</keyword>
<keyword id="KW-0446">Lipid-binding</keyword>
<keyword id="KW-1185">Reference proteome</keyword>
<keyword id="KW-0683">Retinol-binding</keyword>
<keyword id="KW-0964">Secreted</keyword>
<keyword id="KW-0732">Signal</keyword>
<keyword id="KW-0845">Vitamin A</keyword>